<sequence length="373" mass="42509">MVEGIVFEHVSKKFADSIALNDVSFAINKGEFFSLLGPSGCGKTTLLRILAGFEKPDQGRILLDGQDITKLPANKRPINTVFQNYALFPHLTIWENIAFGLRIAQRSETEIKREVEQMLGLIQMKEHGHKKPDQISGGQKQRVAIARALVNHPRILLLDEPLAALDLKLRQKMLLDLDRIHDEVGITFIFVTHDQSEAMAVSDRIAVLHKGSLEQIGNPIEIYEMPKSSFVADFIGDTNFFDGWVKETAQKEYSLVDVEGFPQIYCFNDKQLSKGDAVHLSVRPEKIHISREQIQAHPLQNVFQGIVDDVIYKGDHTHFGIQVGDRKISVNQQHSRFLLDEAPIKWKDVVWIWWHSDDGFILERCQKLENNNE</sequence>
<dbReference type="EC" id="7.6.2.11" evidence="1"/>
<dbReference type="EMBL" id="BX908798">
    <property type="protein sequence ID" value="CAF23595.1"/>
    <property type="molecule type" value="Genomic_DNA"/>
</dbReference>
<dbReference type="RefSeq" id="WP_011175421.1">
    <property type="nucleotide sequence ID" value="NC_005861.2"/>
</dbReference>
<dbReference type="SMR" id="Q6MCV4"/>
<dbReference type="STRING" id="264201.pc0871"/>
<dbReference type="KEGG" id="pcu:PC_RS04200"/>
<dbReference type="eggNOG" id="COG3842">
    <property type="taxonomic scope" value="Bacteria"/>
</dbReference>
<dbReference type="HOGENOM" id="CLU_000604_1_1_0"/>
<dbReference type="OrthoDB" id="9790614at2"/>
<dbReference type="Proteomes" id="UP000000529">
    <property type="component" value="Chromosome"/>
</dbReference>
<dbReference type="GO" id="GO:0043190">
    <property type="term" value="C:ATP-binding cassette (ABC) transporter complex"/>
    <property type="evidence" value="ECO:0007669"/>
    <property type="project" value="InterPro"/>
</dbReference>
<dbReference type="GO" id="GO:0015594">
    <property type="term" value="F:ABC-type putrescine transporter activity"/>
    <property type="evidence" value="ECO:0007669"/>
    <property type="project" value="InterPro"/>
</dbReference>
<dbReference type="GO" id="GO:0005524">
    <property type="term" value="F:ATP binding"/>
    <property type="evidence" value="ECO:0007669"/>
    <property type="project" value="UniProtKB-KW"/>
</dbReference>
<dbReference type="GO" id="GO:0016887">
    <property type="term" value="F:ATP hydrolysis activity"/>
    <property type="evidence" value="ECO:0007669"/>
    <property type="project" value="InterPro"/>
</dbReference>
<dbReference type="CDD" id="cd03300">
    <property type="entry name" value="ABC_PotA_N"/>
    <property type="match status" value="1"/>
</dbReference>
<dbReference type="FunFam" id="3.40.50.300:FF:000133">
    <property type="entry name" value="Spermidine/putrescine import ATP-binding protein PotA"/>
    <property type="match status" value="1"/>
</dbReference>
<dbReference type="Gene3D" id="2.40.50.100">
    <property type="match status" value="1"/>
</dbReference>
<dbReference type="Gene3D" id="3.40.50.300">
    <property type="entry name" value="P-loop containing nucleotide triphosphate hydrolases"/>
    <property type="match status" value="1"/>
</dbReference>
<dbReference type="InterPro" id="IPR003593">
    <property type="entry name" value="AAA+_ATPase"/>
</dbReference>
<dbReference type="InterPro" id="IPR050093">
    <property type="entry name" value="ABC_SmlMolc_Importer"/>
</dbReference>
<dbReference type="InterPro" id="IPR003439">
    <property type="entry name" value="ABC_transporter-like_ATP-bd"/>
</dbReference>
<dbReference type="InterPro" id="IPR017871">
    <property type="entry name" value="ABC_transporter-like_CS"/>
</dbReference>
<dbReference type="InterPro" id="IPR008995">
    <property type="entry name" value="Mo/tungstate-bd_C_term_dom"/>
</dbReference>
<dbReference type="InterPro" id="IPR027417">
    <property type="entry name" value="P-loop_NTPase"/>
</dbReference>
<dbReference type="InterPro" id="IPR005893">
    <property type="entry name" value="PotA-like"/>
</dbReference>
<dbReference type="InterPro" id="IPR017879">
    <property type="entry name" value="PotA_ATP-bd"/>
</dbReference>
<dbReference type="InterPro" id="IPR013611">
    <property type="entry name" value="Transp-assoc_OB_typ2"/>
</dbReference>
<dbReference type="NCBIfam" id="TIGR01187">
    <property type="entry name" value="potA"/>
    <property type="match status" value="1"/>
</dbReference>
<dbReference type="PANTHER" id="PTHR42781">
    <property type="entry name" value="SPERMIDINE/PUTRESCINE IMPORT ATP-BINDING PROTEIN POTA"/>
    <property type="match status" value="1"/>
</dbReference>
<dbReference type="PANTHER" id="PTHR42781:SF4">
    <property type="entry name" value="SPERMIDINE_PUTRESCINE IMPORT ATP-BINDING PROTEIN POTA"/>
    <property type="match status" value="1"/>
</dbReference>
<dbReference type="Pfam" id="PF00005">
    <property type="entry name" value="ABC_tran"/>
    <property type="match status" value="1"/>
</dbReference>
<dbReference type="Pfam" id="PF08402">
    <property type="entry name" value="TOBE_2"/>
    <property type="match status" value="1"/>
</dbReference>
<dbReference type="SMART" id="SM00382">
    <property type="entry name" value="AAA"/>
    <property type="match status" value="1"/>
</dbReference>
<dbReference type="SUPFAM" id="SSF50331">
    <property type="entry name" value="MOP-like"/>
    <property type="match status" value="1"/>
</dbReference>
<dbReference type="SUPFAM" id="SSF52540">
    <property type="entry name" value="P-loop containing nucleoside triphosphate hydrolases"/>
    <property type="match status" value="1"/>
</dbReference>
<dbReference type="PROSITE" id="PS00211">
    <property type="entry name" value="ABC_TRANSPORTER_1"/>
    <property type="match status" value="1"/>
</dbReference>
<dbReference type="PROSITE" id="PS50893">
    <property type="entry name" value="ABC_TRANSPORTER_2"/>
    <property type="match status" value="1"/>
</dbReference>
<dbReference type="PROSITE" id="PS51305">
    <property type="entry name" value="POTA"/>
    <property type="match status" value="1"/>
</dbReference>
<comment type="function">
    <text evidence="1">Part of the ABC transporter complex PotABCD involved in spermidine/putrescine import. Responsible for energy coupling to the transport system.</text>
</comment>
<comment type="catalytic activity">
    <reaction evidence="1">
        <text>ATP + H2O + polyamine-[polyamine-binding protein]Side 1 = ADP + phosphate + polyamineSide 2 + [polyamine-binding protein]Side 1.</text>
        <dbReference type="EC" id="7.6.2.11"/>
    </reaction>
</comment>
<comment type="subunit">
    <text evidence="1">The complex is composed of two ATP-binding proteins (PotA), two transmembrane proteins (PotB and PotC) and a solute-binding protein (PotD).</text>
</comment>
<comment type="subcellular location">
    <subcellularLocation>
        <location evidence="1">Cell inner membrane</location>
        <topology evidence="1">Peripheral membrane protein</topology>
    </subcellularLocation>
</comment>
<comment type="similarity">
    <text evidence="1">Belongs to the ABC transporter superfamily. Spermidine/putrescine importer (TC 3.A.1.11.1) family.</text>
</comment>
<protein>
    <recommendedName>
        <fullName evidence="1">Spermidine/putrescine import ATP-binding protein PotA</fullName>
        <ecNumber evidence="1">7.6.2.11</ecNumber>
    </recommendedName>
</protein>
<reference key="1">
    <citation type="journal article" date="2004" name="Science">
        <title>Illuminating the evolutionary history of chlamydiae.</title>
        <authorList>
            <person name="Horn M."/>
            <person name="Collingro A."/>
            <person name="Schmitz-Esser S."/>
            <person name="Beier C.L."/>
            <person name="Purkhold U."/>
            <person name="Fartmann B."/>
            <person name="Brandt P."/>
            <person name="Nyakatura G.J."/>
            <person name="Droege M."/>
            <person name="Frishman D."/>
            <person name="Rattei T."/>
            <person name="Mewes H.-W."/>
            <person name="Wagner M."/>
        </authorList>
    </citation>
    <scope>NUCLEOTIDE SEQUENCE [LARGE SCALE GENOMIC DNA]</scope>
    <source>
        <strain>UWE25</strain>
    </source>
</reference>
<accession>Q6MCV4</accession>
<feature type="chain" id="PRO_0000286271" description="Spermidine/putrescine import ATP-binding protein PotA">
    <location>
        <begin position="1"/>
        <end position="373"/>
    </location>
</feature>
<feature type="domain" description="ABC transporter" evidence="1">
    <location>
        <begin position="5"/>
        <end position="235"/>
    </location>
</feature>
<feature type="binding site" evidence="1">
    <location>
        <begin position="37"/>
        <end position="44"/>
    </location>
    <ligand>
        <name>ATP</name>
        <dbReference type="ChEBI" id="CHEBI:30616"/>
    </ligand>
</feature>
<proteinExistence type="inferred from homology"/>
<evidence type="ECO:0000255" key="1">
    <source>
        <dbReference type="HAMAP-Rule" id="MF_01726"/>
    </source>
</evidence>
<organism>
    <name type="scientific">Protochlamydia amoebophila (strain UWE25)</name>
    <dbReference type="NCBI Taxonomy" id="264201"/>
    <lineage>
        <taxon>Bacteria</taxon>
        <taxon>Pseudomonadati</taxon>
        <taxon>Chlamydiota</taxon>
        <taxon>Chlamydiia</taxon>
        <taxon>Parachlamydiales</taxon>
        <taxon>Parachlamydiaceae</taxon>
        <taxon>Candidatus Protochlamydia</taxon>
    </lineage>
</organism>
<name>POTA_PARUW</name>
<gene>
    <name evidence="1" type="primary">potA</name>
    <name type="ordered locus">pc0871</name>
</gene>
<keyword id="KW-0067">ATP-binding</keyword>
<keyword id="KW-0997">Cell inner membrane</keyword>
<keyword id="KW-1003">Cell membrane</keyword>
<keyword id="KW-0472">Membrane</keyword>
<keyword id="KW-0547">Nucleotide-binding</keyword>
<keyword id="KW-1185">Reference proteome</keyword>
<keyword id="KW-1278">Translocase</keyword>
<keyword id="KW-0813">Transport</keyword>